<name>GON2_VERMO</name>
<gene>
    <name type="primary">gnrh2</name>
</gene>
<organism>
    <name type="scientific">Verasper moseri</name>
    <name type="common">Barfin flounder</name>
    <dbReference type="NCBI Taxonomy" id="98923"/>
    <lineage>
        <taxon>Eukaryota</taxon>
        <taxon>Metazoa</taxon>
        <taxon>Chordata</taxon>
        <taxon>Craniata</taxon>
        <taxon>Vertebrata</taxon>
        <taxon>Euteleostomi</taxon>
        <taxon>Actinopterygii</taxon>
        <taxon>Neopterygii</taxon>
        <taxon>Teleostei</taxon>
        <taxon>Neoteleostei</taxon>
        <taxon>Acanthomorphata</taxon>
        <taxon>Carangaria</taxon>
        <taxon>Pleuronectiformes</taxon>
        <taxon>Pleuronectoidei</taxon>
        <taxon>Pleuronectidae</taxon>
        <taxon>Verasper</taxon>
    </lineage>
</organism>
<reference evidence="6 7" key="1">
    <citation type="journal article" date="2002" name="Gen. Comp. Endocrinol.">
        <title>Molecular cloning of three cDNAs encoding different GnRHs in the brain of barfin flounder.</title>
        <authorList>
            <person name="Amano M."/>
            <person name="Takahashi A."/>
            <person name="Yamanome T."/>
            <person name="Okubo K."/>
            <person name="Aida K."/>
            <person name="Yamamori K."/>
        </authorList>
    </citation>
    <scope>NUCLEOTIDE SEQUENCE [MRNA]</scope>
    <scope>TISSUE SPECIFICITY</scope>
    <source>
        <tissue evidence="5">Brain</tissue>
    </source>
</reference>
<proteinExistence type="evidence at transcript level"/>
<evidence type="ECO:0000250" key="1"/>
<evidence type="ECO:0000250" key="2">
    <source>
        <dbReference type="UniProtKB" id="P51925"/>
    </source>
</evidence>
<evidence type="ECO:0000255" key="3"/>
<evidence type="ECO:0000255" key="4">
    <source>
        <dbReference type="RuleBase" id="RU000635"/>
    </source>
</evidence>
<evidence type="ECO:0000269" key="5">
    <source>
    </source>
</evidence>
<evidence type="ECO:0000305" key="6"/>
<evidence type="ECO:0000312" key="7">
    <source>
        <dbReference type="EMBL" id="BAB83983.1"/>
    </source>
</evidence>
<comment type="function">
    <text evidence="4">Stimulates the secretion of gonadotropins.</text>
</comment>
<comment type="subcellular location">
    <subcellularLocation>
        <location evidence="4">Secreted</location>
    </subcellularLocation>
</comment>
<comment type="tissue specificity">
    <text evidence="5">Midbrain tegmentum.</text>
</comment>
<comment type="similarity">
    <text evidence="6">Belongs to the GnRH family.</text>
</comment>
<keyword id="KW-0027">Amidation</keyword>
<keyword id="KW-0165">Cleavage on pair of basic residues</keyword>
<keyword id="KW-0372">Hormone</keyword>
<keyword id="KW-0873">Pyrrolidone carboxylic acid</keyword>
<keyword id="KW-0964">Secreted</keyword>
<keyword id="KW-0732">Signal</keyword>
<accession>Q8UW81</accession>
<protein>
    <recommendedName>
        <fullName>Progonadoliberin-2</fullName>
    </recommendedName>
    <alternativeName>
        <fullName>Chicken-type II gonadotropin-releasing hormone</fullName>
    </alternativeName>
    <alternativeName>
        <fullName>Progonadoliberin II</fullName>
    </alternativeName>
    <alternativeName>
        <fullName>cGnRH-II</fullName>
    </alternativeName>
    <component>
        <recommendedName>
            <fullName>Gonadoliberin-2</fullName>
        </recommendedName>
        <alternativeName>
            <fullName>Gonadoliberin II</fullName>
        </alternativeName>
        <alternativeName>
            <fullName>Gonadotropin-releasing hormone II</fullName>
            <shortName>GnRH-II</shortName>
        </alternativeName>
        <alternativeName>
            <fullName>Luliberin II</fullName>
        </alternativeName>
        <alternativeName>
            <fullName>Luteinizing hormone-releasing hormone II</fullName>
            <shortName>LH-RH II</shortName>
        </alternativeName>
    </component>
    <component>
        <recommendedName>
            <fullName>GnRH-associated peptide 2</fullName>
        </recommendedName>
        <alternativeName>
            <fullName>GnRH-associated peptide II</fullName>
        </alternativeName>
    </component>
</protein>
<sequence length="85" mass="9593">MCASRLVLLLGLLLCVGAHLSSGQHWSHGWYPGGKRELDSFGTSEISEEIKLCEAGECSYLRPQRRNILRNILLDALARELQKRK</sequence>
<dbReference type="EMBL" id="AB066359">
    <property type="protein sequence ID" value="BAB83983.1"/>
    <property type="molecule type" value="mRNA"/>
</dbReference>
<dbReference type="GO" id="GO:0005576">
    <property type="term" value="C:extracellular region"/>
    <property type="evidence" value="ECO:0000250"/>
    <property type="project" value="UniProtKB"/>
</dbReference>
<dbReference type="GO" id="GO:0005615">
    <property type="term" value="C:extracellular space"/>
    <property type="evidence" value="ECO:0000250"/>
    <property type="project" value="UniProtKB"/>
</dbReference>
<dbReference type="GO" id="GO:0005183">
    <property type="term" value="F:gonadotropin hormone-releasing hormone activity"/>
    <property type="evidence" value="ECO:0000250"/>
    <property type="project" value="UniProtKB"/>
</dbReference>
<dbReference type="GO" id="GO:0031530">
    <property type="term" value="F:gonadotropin-releasing hormone receptor binding"/>
    <property type="evidence" value="ECO:0007669"/>
    <property type="project" value="TreeGrafter"/>
</dbReference>
<dbReference type="InterPro" id="IPR002012">
    <property type="entry name" value="GnRH"/>
</dbReference>
<dbReference type="InterPro" id="IPR019792">
    <property type="entry name" value="Gonadoliberin"/>
</dbReference>
<dbReference type="PANTHER" id="PTHR10522">
    <property type="entry name" value="GONADOLIBERIN"/>
    <property type="match status" value="1"/>
</dbReference>
<dbReference type="PANTHER" id="PTHR10522:SF8">
    <property type="entry name" value="PROGONADOLIBERIN"/>
    <property type="match status" value="1"/>
</dbReference>
<dbReference type="Pfam" id="PF00446">
    <property type="entry name" value="GnRH"/>
    <property type="match status" value="1"/>
</dbReference>
<dbReference type="PROSITE" id="PS00473">
    <property type="entry name" value="GNRH"/>
    <property type="match status" value="1"/>
</dbReference>
<feature type="signal peptide" evidence="3 7">
    <location>
        <begin position="1"/>
        <end position="23"/>
    </location>
</feature>
<feature type="chain" id="PRO_0000012450" description="Progonadoliberin-2">
    <location>
        <begin position="24"/>
        <end position="85"/>
    </location>
</feature>
<feature type="peptide" id="PRO_0000012451" description="Gonadoliberin-2">
    <location>
        <begin position="24"/>
        <end position="33"/>
    </location>
</feature>
<feature type="peptide" id="PRO_0000012452" description="GnRH-associated peptide 2">
    <location>
        <begin position="37"/>
        <end position="85"/>
    </location>
</feature>
<feature type="modified residue" description="Pyrrolidone carboxylic acid" evidence="2">
    <location>
        <position position="24"/>
    </location>
</feature>
<feature type="modified residue" description="Glycine amide" evidence="1">
    <location>
        <position position="33"/>
    </location>
</feature>